<reference key="1">
    <citation type="journal article" date="2009" name="PLoS Genet.">
        <title>Organised genome dynamics in the Escherichia coli species results in highly diverse adaptive paths.</title>
        <authorList>
            <person name="Touchon M."/>
            <person name="Hoede C."/>
            <person name="Tenaillon O."/>
            <person name="Barbe V."/>
            <person name="Baeriswyl S."/>
            <person name="Bidet P."/>
            <person name="Bingen E."/>
            <person name="Bonacorsi S."/>
            <person name="Bouchier C."/>
            <person name="Bouvet O."/>
            <person name="Calteau A."/>
            <person name="Chiapello H."/>
            <person name="Clermont O."/>
            <person name="Cruveiller S."/>
            <person name="Danchin A."/>
            <person name="Diard M."/>
            <person name="Dossat C."/>
            <person name="Karoui M.E."/>
            <person name="Frapy E."/>
            <person name="Garry L."/>
            <person name="Ghigo J.M."/>
            <person name="Gilles A.M."/>
            <person name="Johnson J."/>
            <person name="Le Bouguenec C."/>
            <person name="Lescat M."/>
            <person name="Mangenot S."/>
            <person name="Martinez-Jehanne V."/>
            <person name="Matic I."/>
            <person name="Nassif X."/>
            <person name="Oztas S."/>
            <person name="Petit M.A."/>
            <person name="Pichon C."/>
            <person name="Rouy Z."/>
            <person name="Ruf C.S."/>
            <person name="Schneider D."/>
            <person name="Tourret J."/>
            <person name="Vacherie B."/>
            <person name="Vallenet D."/>
            <person name="Medigue C."/>
            <person name="Rocha E.P.C."/>
            <person name="Denamur E."/>
        </authorList>
    </citation>
    <scope>NUCLEOTIDE SEQUENCE [LARGE SCALE GENOMIC DNA]</scope>
    <source>
        <strain>UMN026 / ExPEC</strain>
    </source>
</reference>
<name>RLME_ECOLU</name>
<organism>
    <name type="scientific">Escherichia coli O17:K52:H18 (strain UMN026 / ExPEC)</name>
    <dbReference type="NCBI Taxonomy" id="585056"/>
    <lineage>
        <taxon>Bacteria</taxon>
        <taxon>Pseudomonadati</taxon>
        <taxon>Pseudomonadota</taxon>
        <taxon>Gammaproteobacteria</taxon>
        <taxon>Enterobacterales</taxon>
        <taxon>Enterobacteriaceae</taxon>
        <taxon>Escherichia</taxon>
    </lineage>
</organism>
<sequence>MTGKKRSASSSRWLQEHFSDKYVQQAQKKGLRSRAWFKLDEIQQSDKLFKPGMTVVDLGAAPGGWSQYVVTQIGGKGRIIACDLLPMDPIVGVDFLQGDFRDELVMKALLERVGDSKVQVVMSDMAPNMSGTPAVDIPRAMYLVELALEMCRDVLAPGGSFVVKVFQGEGFDEYLREIRSLFTKVKVRKPDSSRARSREVYIVATGRKP</sequence>
<keyword id="KW-0963">Cytoplasm</keyword>
<keyword id="KW-0489">Methyltransferase</keyword>
<keyword id="KW-0698">rRNA processing</keyword>
<keyword id="KW-0949">S-adenosyl-L-methionine</keyword>
<keyword id="KW-0808">Transferase</keyword>
<comment type="function">
    <text evidence="1">Specifically methylates the uridine in position 2552 of 23S rRNA at the 2'-O position of the ribose in the fully assembled 50S ribosomal subunit.</text>
</comment>
<comment type="catalytic activity">
    <reaction evidence="1">
        <text>uridine(2552) in 23S rRNA + S-adenosyl-L-methionine = 2'-O-methyluridine(2552) in 23S rRNA + S-adenosyl-L-homocysteine + H(+)</text>
        <dbReference type="Rhea" id="RHEA:42720"/>
        <dbReference type="Rhea" id="RHEA-COMP:10202"/>
        <dbReference type="Rhea" id="RHEA-COMP:10203"/>
        <dbReference type="ChEBI" id="CHEBI:15378"/>
        <dbReference type="ChEBI" id="CHEBI:57856"/>
        <dbReference type="ChEBI" id="CHEBI:59789"/>
        <dbReference type="ChEBI" id="CHEBI:65315"/>
        <dbReference type="ChEBI" id="CHEBI:74478"/>
        <dbReference type="EC" id="2.1.1.166"/>
    </reaction>
</comment>
<comment type="subcellular location">
    <subcellularLocation>
        <location evidence="1">Cytoplasm</location>
    </subcellularLocation>
</comment>
<comment type="similarity">
    <text evidence="1">Belongs to the class I-like SAM-binding methyltransferase superfamily. RNA methyltransferase RlmE family.</text>
</comment>
<evidence type="ECO:0000255" key="1">
    <source>
        <dbReference type="HAMAP-Rule" id="MF_01547"/>
    </source>
</evidence>
<proteinExistence type="inferred from homology"/>
<gene>
    <name evidence="1" type="primary">rlmE</name>
    <name evidence="1" type="synonym">ftsJ</name>
    <name evidence="1" type="synonym">rrmJ</name>
    <name type="ordered locus">ECUMN_3659</name>
</gene>
<dbReference type="EC" id="2.1.1.166" evidence="1"/>
<dbReference type="EMBL" id="CU928163">
    <property type="protein sequence ID" value="CAR14813.1"/>
    <property type="molecule type" value="Genomic_DNA"/>
</dbReference>
<dbReference type="RefSeq" id="WP_000145975.1">
    <property type="nucleotide sequence ID" value="NC_011751.1"/>
</dbReference>
<dbReference type="RefSeq" id="YP_002414318.1">
    <property type="nucleotide sequence ID" value="NC_011751.1"/>
</dbReference>
<dbReference type="SMR" id="B7NDG3"/>
<dbReference type="STRING" id="585056.ECUMN_3659"/>
<dbReference type="GeneID" id="93778802"/>
<dbReference type="KEGG" id="eum:ECUMN_3659"/>
<dbReference type="PATRIC" id="fig|585056.7.peg.3839"/>
<dbReference type="HOGENOM" id="CLU_009422_4_0_6"/>
<dbReference type="Proteomes" id="UP000007097">
    <property type="component" value="Chromosome"/>
</dbReference>
<dbReference type="GO" id="GO:0005737">
    <property type="term" value="C:cytoplasm"/>
    <property type="evidence" value="ECO:0007669"/>
    <property type="project" value="UniProtKB-SubCell"/>
</dbReference>
<dbReference type="GO" id="GO:0008650">
    <property type="term" value="F:rRNA (uridine-2'-O-)-methyltransferase activity"/>
    <property type="evidence" value="ECO:0007669"/>
    <property type="project" value="UniProtKB-UniRule"/>
</dbReference>
<dbReference type="CDD" id="cd02440">
    <property type="entry name" value="AdoMet_MTases"/>
    <property type="match status" value="1"/>
</dbReference>
<dbReference type="FunFam" id="3.40.50.150:FF:000005">
    <property type="entry name" value="Ribosomal RNA large subunit methyltransferase E"/>
    <property type="match status" value="1"/>
</dbReference>
<dbReference type="Gene3D" id="3.40.50.150">
    <property type="entry name" value="Vaccinia Virus protein VP39"/>
    <property type="match status" value="1"/>
</dbReference>
<dbReference type="HAMAP" id="MF_01547">
    <property type="entry name" value="RNA_methyltr_E"/>
    <property type="match status" value="1"/>
</dbReference>
<dbReference type="InterPro" id="IPR050082">
    <property type="entry name" value="RNA_methyltr_RlmE"/>
</dbReference>
<dbReference type="InterPro" id="IPR002877">
    <property type="entry name" value="RNA_MeTrfase_FtsJ_dom"/>
</dbReference>
<dbReference type="InterPro" id="IPR015507">
    <property type="entry name" value="rRNA-MeTfrase_E"/>
</dbReference>
<dbReference type="InterPro" id="IPR004512">
    <property type="entry name" value="rRNA_MeTrfase_gammaproteobac"/>
</dbReference>
<dbReference type="InterPro" id="IPR029063">
    <property type="entry name" value="SAM-dependent_MTases_sf"/>
</dbReference>
<dbReference type="NCBIfam" id="NF008390">
    <property type="entry name" value="PRK11188.1"/>
    <property type="match status" value="1"/>
</dbReference>
<dbReference type="NCBIfam" id="TIGR00438">
    <property type="entry name" value="rrmJ"/>
    <property type="match status" value="1"/>
</dbReference>
<dbReference type="PANTHER" id="PTHR10920">
    <property type="entry name" value="RIBOSOMAL RNA METHYLTRANSFERASE"/>
    <property type="match status" value="1"/>
</dbReference>
<dbReference type="PANTHER" id="PTHR10920:SF18">
    <property type="entry name" value="RRNA METHYLTRANSFERASE 2, MITOCHONDRIAL"/>
    <property type="match status" value="1"/>
</dbReference>
<dbReference type="Pfam" id="PF01728">
    <property type="entry name" value="FtsJ"/>
    <property type="match status" value="1"/>
</dbReference>
<dbReference type="PIRSF" id="PIRSF005461">
    <property type="entry name" value="23S_rRNA_mtase"/>
    <property type="match status" value="1"/>
</dbReference>
<dbReference type="SUPFAM" id="SSF53335">
    <property type="entry name" value="S-adenosyl-L-methionine-dependent methyltransferases"/>
    <property type="match status" value="1"/>
</dbReference>
<feature type="chain" id="PRO_1000194995" description="Ribosomal RNA large subunit methyltransferase E">
    <location>
        <begin position="1"/>
        <end position="209"/>
    </location>
</feature>
<feature type="active site" description="Proton acceptor" evidence="1">
    <location>
        <position position="164"/>
    </location>
</feature>
<feature type="binding site" evidence="1">
    <location>
        <position position="63"/>
    </location>
    <ligand>
        <name>S-adenosyl-L-methionine</name>
        <dbReference type="ChEBI" id="CHEBI:59789"/>
    </ligand>
</feature>
<feature type="binding site" evidence="1">
    <location>
        <position position="65"/>
    </location>
    <ligand>
        <name>S-adenosyl-L-methionine</name>
        <dbReference type="ChEBI" id="CHEBI:59789"/>
    </ligand>
</feature>
<feature type="binding site" evidence="1">
    <location>
        <position position="83"/>
    </location>
    <ligand>
        <name>S-adenosyl-L-methionine</name>
        <dbReference type="ChEBI" id="CHEBI:59789"/>
    </ligand>
</feature>
<feature type="binding site" evidence="1">
    <location>
        <position position="99"/>
    </location>
    <ligand>
        <name>S-adenosyl-L-methionine</name>
        <dbReference type="ChEBI" id="CHEBI:59789"/>
    </ligand>
</feature>
<feature type="binding site" evidence="1">
    <location>
        <position position="124"/>
    </location>
    <ligand>
        <name>S-adenosyl-L-methionine</name>
        <dbReference type="ChEBI" id="CHEBI:59789"/>
    </ligand>
</feature>
<accession>B7NDG3</accession>
<protein>
    <recommendedName>
        <fullName evidence="1">Ribosomal RNA large subunit methyltransferase E</fullName>
        <ecNumber evidence="1">2.1.1.166</ecNumber>
    </recommendedName>
    <alternativeName>
        <fullName evidence="1">23S rRNA Um2552 methyltransferase</fullName>
    </alternativeName>
    <alternativeName>
        <fullName evidence="1">rRNA (uridine-2'-O-)-methyltransferase</fullName>
    </alternativeName>
</protein>